<evidence type="ECO:0000255" key="1">
    <source>
        <dbReference type="HAMAP-Rule" id="MF_00015"/>
    </source>
</evidence>
<sequence>MKALTARQQQVYDLVRDHISQTGMPPTRAEIAARLGFRSPNAAEEHLKALARKGVIEIVAGASRGIRLLLEESGLPLIGRVAAGEPLLAQEHIESHYQVDPALFKPSADFLLRVSGMSMKDVGIMDGDLLAVHKTQNVRNGQIIVARIEDEVTVKRFKQTGNKVELLAENPEFKPIEVDLREQGLTIEGLAVGVIRNGNWS</sequence>
<accession>Q7MZB8</accession>
<feature type="chain" id="PRO_0000170064" description="LexA repressor">
    <location>
        <begin position="1"/>
        <end position="201"/>
    </location>
</feature>
<feature type="DNA-binding region" description="H-T-H motif" evidence="1">
    <location>
        <begin position="28"/>
        <end position="48"/>
    </location>
</feature>
<feature type="active site" description="For autocatalytic cleavage activity" evidence="1">
    <location>
        <position position="118"/>
    </location>
</feature>
<feature type="active site" description="For autocatalytic cleavage activity" evidence="1">
    <location>
        <position position="155"/>
    </location>
</feature>
<feature type="site" description="Cleavage; by autolysis" evidence="1">
    <location>
        <begin position="83"/>
        <end position="84"/>
    </location>
</feature>
<organism>
    <name type="scientific">Photorhabdus laumondii subsp. laumondii (strain DSM 15139 / CIP 105565 / TT01)</name>
    <name type="common">Photorhabdus luminescens subsp. laumondii</name>
    <dbReference type="NCBI Taxonomy" id="243265"/>
    <lineage>
        <taxon>Bacteria</taxon>
        <taxon>Pseudomonadati</taxon>
        <taxon>Pseudomonadota</taxon>
        <taxon>Gammaproteobacteria</taxon>
        <taxon>Enterobacterales</taxon>
        <taxon>Morganellaceae</taxon>
        <taxon>Photorhabdus</taxon>
    </lineage>
</organism>
<protein>
    <recommendedName>
        <fullName evidence="1">LexA repressor</fullName>
        <ecNumber evidence="1">3.4.21.88</ecNumber>
    </recommendedName>
</protein>
<dbReference type="EC" id="3.4.21.88" evidence="1"/>
<dbReference type="EMBL" id="BX571873">
    <property type="protein sequence ID" value="CAE16746.1"/>
    <property type="molecule type" value="Genomic_DNA"/>
</dbReference>
<dbReference type="RefSeq" id="WP_011148464.1">
    <property type="nucleotide sequence ID" value="NC_005126.1"/>
</dbReference>
<dbReference type="SMR" id="Q7MZB8"/>
<dbReference type="STRING" id="243265.plu4374"/>
<dbReference type="MEROPS" id="S24.001"/>
<dbReference type="GeneID" id="48850584"/>
<dbReference type="KEGG" id="plu:plu4374"/>
<dbReference type="eggNOG" id="COG1974">
    <property type="taxonomic scope" value="Bacteria"/>
</dbReference>
<dbReference type="HOGENOM" id="CLU_066192_45_3_6"/>
<dbReference type="OrthoDB" id="9802364at2"/>
<dbReference type="Proteomes" id="UP000002514">
    <property type="component" value="Chromosome"/>
</dbReference>
<dbReference type="GO" id="GO:0003677">
    <property type="term" value="F:DNA binding"/>
    <property type="evidence" value="ECO:0007669"/>
    <property type="project" value="UniProtKB-UniRule"/>
</dbReference>
<dbReference type="GO" id="GO:0004252">
    <property type="term" value="F:serine-type endopeptidase activity"/>
    <property type="evidence" value="ECO:0007669"/>
    <property type="project" value="UniProtKB-UniRule"/>
</dbReference>
<dbReference type="GO" id="GO:0006281">
    <property type="term" value="P:DNA repair"/>
    <property type="evidence" value="ECO:0007669"/>
    <property type="project" value="UniProtKB-UniRule"/>
</dbReference>
<dbReference type="GO" id="GO:0006260">
    <property type="term" value="P:DNA replication"/>
    <property type="evidence" value="ECO:0007669"/>
    <property type="project" value="UniProtKB-UniRule"/>
</dbReference>
<dbReference type="GO" id="GO:0045892">
    <property type="term" value="P:negative regulation of DNA-templated transcription"/>
    <property type="evidence" value="ECO:0007669"/>
    <property type="project" value="UniProtKB-UniRule"/>
</dbReference>
<dbReference type="GO" id="GO:0006508">
    <property type="term" value="P:proteolysis"/>
    <property type="evidence" value="ECO:0007669"/>
    <property type="project" value="InterPro"/>
</dbReference>
<dbReference type="GO" id="GO:0009432">
    <property type="term" value="P:SOS response"/>
    <property type="evidence" value="ECO:0007669"/>
    <property type="project" value="UniProtKB-UniRule"/>
</dbReference>
<dbReference type="CDD" id="cd06529">
    <property type="entry name" value="S24_LexA-like"/>
    <property type="match status" value="1"/>
</dbReference>
<dbReference type="FunFam" id="1.10.10.10:FF:000009">
    <property type="entry name" value="LexA repressor"/>
    <property type="match status" value="1"/>
</dbReference>
<dbReference type="FunFam" id="2.10.109.10:FF:000001">
    <property type="entry name" value="LexA repressor"/>
    <property type="match status" value="1"/>
</dbReference>
<dbReference type="Gene3D" id="2.10.109.10">
    <property type="entry name" value="Umud Fragment, subunit A"/>
    <property type="match status" value="1"/>
</dbReference>
<dbReference type="Gene3D" id="1.10.10.10">
    <property type="entry name" value="Winged helix-like DNA-binding domain superfamily/Winged helix DNA-binding domain"/>
    <property type="match status" value="1"/>
</dbReference>
<dbReference type="HAMAP" id="MF_00015">
    <property type="entry name" value="LexA"/>
    <property type="match status" value="1"/>
</dbReference>
<dbReference type="InterPro" id="IPR006200">
    <property type="entry name" value="LexA"/>
</dbReference>
<dbReference type="InterPro" id="IPR039418">
    <property type="entry name" value="LexA-like"/>
</dbReference>
<dbReference type="InterPro" id="IPR036286">
    <property type="entry name" value="LexA/Signal_pep-like_sf"/>
</dbReference>
<dbReference type="InterPro" id="IPR006199">
    <property type="entry name" value="LexA_DNA-bd_dom"/>
</dbReference>
<dbReference type="InterPro" id="IPR050077">
    <property type="entry name" value="LexA_repressor"/>
</dbReference>
<dbReference type="InterPro" id="IPR006197">
    <property type="entry name" value="Peptidase_S24_LexA"/>
</dbReference>
<dbReference type="InterPro" id="IPR015927">
    <property type="entry name" value="Peptidase_S24_S26A/B/C"/>
</dbReference>
<dbReference type="InterPro" id="IPR036388">
    <property type="entry name" value="WH-like_DNA-bd_sf"/>
</dbReference>
<dbReference type="InterPro" id="IPR036390">
    <property type="entry name" value="WH_DNA-bd_sf"/>
</dbReference>
<dbReference type="NCBIfam" id="TIGR00498">
    <property type="entry name" value="lexA"/>
    <property type="match status" value="1"/>
</dbReference>
<dbReference type="PANTHER" id="PTHR33516">
    <property type="entry name" value="LEXA REPRESSOR"/>
    <property type="match status" value="1"/>
</dbReference>
<dbReference type="PANTHER" id="PTHR33516:SF2">
    <property type="entry name" value="LEXA REPRESSOR-RELATED"/>
    <property type="match status" value="1"/>
</dbReference>
<dbReference type="Pfam" id="PF01726">
    <property type="entry name" value="LexA_DNA_bind"/>
    <property type="match status" value="1"/>
</dbReference>
<dbReference type="Pfam" id="PF00717">
    <property type="entry name" value="Peptidase_S24"/>
    <property type="match status" value="1"/>
</dbReference>
<dbReference type="PRINTS" id="PR00726">
    <property type="entry name" value="LEXASERPTASE"/>
</dbReference>
<dbReference type="SUPFAM" id="SSF51306">
    <property type="entry name" value="LexA/Signal peptidase"/>
    <property type="match status" value="1"/>
</dbReference>
<dbReference type="SUPFAM" id="SSF46785">
    <property type="entry name" value="Winged helix' DNA-binding domain"/>
    <property type="match status" value="1"/>
</dbReference>
<gene>
    <name evidence="1" type="primary">lexA</name>
    <name type="ordered locus">plu4374</name>
</gene>
<comment type="function">
    <text evidence="1">Represses a number of genes involved in the response to DNA damage (SOS response), including recA and lexA. In the presence of single-stranded DNA, RecA interacts with LexA causing an autocatalytic cleavage which disrupts the DNA-binding part of LexA, leading to derepression of the SOS regulon and eventually DNA repair.</text>
</comment>
<comment type="catalytic activity">
    <reaction evidence="1">
        <text>Hydrolysis of Ala-|-Gly bond in repressor LexA.</text>
        <dbReference type="EC" id="3.4.21.88"/>
    </reaction>
</comment>
<comment type="subunit">
    <text evidence="1">Homodimer.</text>
</comment>
<comment type="similarity">
    <text evidence="1">Belongs to the peptidase S24 family.</text>
</comment>
<name>LEXA_PHOLL</name>
<keyword id="KW-0068">Autocatalytic cleavage</keyword>
<keyword id="KW-0227">DNA damage</keyword>
<keyword id="KW-0234">DNA repair</keyword>
<keyword id="KW-0235">DNA replication</keyword>
<keyword id="KW-0238">DNA-binding</keyword>
<keyword id="KW-0378">Hydrolase</keyword>
<keyword id="KW-1185">Reference proteome</keyword>
<keyword id="KW-0678">Repressor</keyword>
<keyword id="KW-0742">SOS response</keyword>
<keyword id="KW-0804">Transcription</keyword>
<keyword id="KW-0805">Transcription regulation</keyword>
<proteinExistence type="inferred from homology"/>
<reference key="1">
    <citation type="journal article" date="2003" name="Nat. Biotechnol.">
        <title>The genome sequence of the entomopathogenic bacterium Photorhabdus luminescens.</title>
        <authorList>
            <person name="Duchaud E."/>
            <person name="Rusniok C."/>
            <person name="Frangeul L."/>
            <person name="Buchrieser C."/>
            <person name="Givaudan A."/>
            <person name="Taourit S."/>
            <person name="Bocs S."/>
            <person name="Boursaux-Eude C."/>
            <person name="Chandler M."/>
            <person name="Charles J.-F."/>
            <person name="Dassa E."/>
            <person name="Derose R."/>
            <person name="Derzelle S."/>
            <person name="Freyssinet G."/>
            <person name="Gaudriault S."/>
            <person name="Medigue C."/>
            <person name="Lanois A."/>
            <person name="Powell K."/>
            <person name="Siguier P."/>
            <person name="Vincent R."/>
            <person name="Wingate V."/>
            <person name="Zouine M."/>
            <person name="Glaser P."/>
            <person name="Boemare N."/>
            <person name="Danchin A."/>
            <person name="Kunst F."/>
        </authorList>
    </citation>
    <scope>NUCLEOTIDE SEQUENCE [LARGE SCALE GENOMIC DNA]</scope>
    <source>
        <strain>DSM 15139 / CIP 105565 / TT01</strain>
    </source>
</reference>